<protein>
    <recommendedName>
        <fullName evidence="2">ATP-dependent DNA helicase CHL1</fullName>
        <ecNumber evidence="3">5.6.2.3</ecNumber>
    </recommendedName>
    <alternativeName>
        <fullName evidence="2">Chromosome loss protein 1</fullName>
    </alternativeName>
    <alternativeName>
        <fullName evidence="6">DNA 5'-3' helicase CHL1</fullName>
    </alternativeName>
</protein>
<organism>
    <name type="scientific">Scheffersomyces stipitis (strain ATCC 58785 / CBS 6054 / NBRC 10063 / NRRL Y-11545)</name>
    <name type="common">Yeast</name>
    <name type="synonym">Pichia stipitis</name>
    <dbReference type="NCBI Taxonomy" id="322104"/>
    <lineage>
        <taxon>Eukaryota</taxon>
        <taxon>Fungi</taxon>
        <taxon>Dikarya</taxon>
        <taxon>Ascomycota</taxon>
        <taxon>Saccharomycotina</taxon>
        <taxon>Pichiomycetes</taxon>
        <taxon>Debaryomycetaceae</taxon>
        <taxon>Scheffersomyces</taxon>
    </lineage>
</organism>
<sequence length="835" mass="95266">METSICSPENRYSHPYKPYDIQIQLMDAIYDTIDNGYKIGLFESPTGTGKTLSIICSTMTWLRDYKRENVFQPMAGLDGSDTDDSDSDDEPEWVKKAYRDTIVSRSENKMVDYEMYLEKIQNEYENNIQTAGSIKSSRPPKKKRSTAKKQELHDEDFLPEDYYSDSEVKPNADKLTVLESEISQLLDKVNGRTDEIEMTNDCPVNIYFSSRTHSQLNQFAHQLALTKFQSSFKGVEERTKYLPIGSRKQLCINEKVKSFSKNDSNINDVCVDLQKSKEGCQFLPKDYLNSSLTKKLSDLSLSKIHDIEEIADLGSNMKVCPYYSVRKGVEMTEIISLPYQILLSESTRAILNLQIEDSIVVIDEAHNLMDTITSMHSVCITIGEMNSIIKALKFYLGRFLKKLNSGNRIHLMKLIKLCQLVISFIQKSEKCNNIKVGNEINTSDIYQNSTGDMLNIHILEAFLAKSKIAYKIESYMEKVAENENEQAKTSSSNPLLYKIVQFLKCLVNPSKEGKFFWDSTNGITSIKYMLLDPSSVFKDIVSKARCVILCGGTMEPMSEFKNFLFPYVEDKKIKSFSCNHIIPPDNLKVYPVSSQNNVTLEFSFDNRNNPLMIEALGASIVRICQSVPDGVVVFFPSYKYMNHILSIWKSTDVLTQIESQKKLFEEPTSASQVQTILADYANTIKEEKKGAILFSVVGGKMSEGINFADELGRAVVMVGLPYPNAYSGEIIAKRKFIESEAIARGCSMSEAQRNSQSYYENLCMRAVNQSIGRSIRHINDYSIIYLVDCRYQSSRIQNKLSSWVRKRIETRNYNMDQIMEETRDFFMCKTIARLA</sequence>
<dbReference type="EC" id="5.6.2.3" evidence="3"/>
<dbReference type="EMBL" id="CP000496">
    <property type="protein sequence ID" value="ABN64250.2"/>
    <property type="molecule type" value="Genomic_DNA"/>
</dbReference>
<dbReference type="RefSeq" id="XP_001382279.2">
    <property type="nucleotide sequence ID" value="XM_001382242.1"/>
</dbReference>
<dbReference type="SMR" id="A3LN13"/>
<dbReference type="FunCoup" id="A3LN13">
    <property type="interactions" value="999"/>
</dbReference>
<dbReference type="STRING" id="322104.A3LN13"/>
<dbReference type="GeneID" id="4836691"/>
<dbReference type="KEGG" id="pic:PICST_54439"/>
<dbReference type="eggNOG" id="KOG1133">
    <property type="taxonomic scope" value="Eukaryota"/>
</dbReference>
<dbReference type="HOGENOM" id="CLU_006515_2_0_1"/>
<dbReference type="InParanoid" id="A3LN13"/>
<dbReference type="OMA" id="QTHQFRD"/>
<dbReference type="OrthoDB" id="267079at2759"/>
<dbReference type="Proteomes" id="UP000002258">
    <property type="component" value="Chromosome 2"/>
</dbReference>
<dbReference type="GO" id="GO:0000785">
    <property type="term" value="C:chromatin"/>
    <property type="evidence" value="ECO:0007669"/>
    <property type="project" value="EnsemblFungi"/>
</dbReference>
<dbReference type="GO" id="GO:0005634">
    <property type="term" value="C:nucleus"/>
    <property type="evidence" value="ECO:0007669"/>
    <property type="project" value="UniProtKB-SubCell"/>
</dbReference>
<dbReference type="GO" id="GO:0005524">
    <property type="term" value="F:ATP binding"/>
    <property type="evidence" value="ECO:0007669"/>
    <property type="project" value="UniProtKB-KW"/>
</dbReference>
<dbReference type="GO" id="GO:0016887">
    <property type="term" value="F:ATP hydrolysis activity"/>
    <property type="evidence" value="ECO:0007669"/>
    <property type="project" value="RHEA"/>
</dbReference>
<dbReference type="GO" id="GO:0003677">
    <property type="term" value="F:DNA binding"/>
    <property type="evidence" value="ECO:0007669"/>
    <property type="project" value="UniProtKB-KW"/>
</dbReference>
<dbReference type="GO" id="GO:0003678">
    <property type="term" value="F:DNA helicase activity"/>
    <property type="evidence" value="ECO:0007669"/>
    <property type="project" value="EnsemblFungi"/>
</dbReference>
<dbReference type="GO" id="GO:0051536">
    <property type="term" value="F:iron-sulfur cluster binding"/>
    <property type="evidence" value="ECO:0007669"/>
    <property type="project" value="UniProtKB-KW"/>
</dbReference>
<dbReference type="GO" id="GO:0046872">
    <property type="term" value="F:metal ion binding"/>
    <property type="evidence" value="ECO:0007669"/>
    <property type="project" value="UniProtKB-KW"/>
</dbReference>
<dbReference type="GO" id="GO:0034085">
    <property type="term" value="P:establishment of sister chromatid cohesion"/>
    <property type="evidence" value="ECO:0007669"/>
    <property type="project" value="EnsemblFungi"/>
</dbReference>
<dbReference type="GO" id="GO:0036297">
    <property type="term" value="P:interstrand cross-link repair"/>
    <property type="evidence" value="ECO:0007669"/>
    <property type="project" value="EnsemblFungi"/>
</dbReference>
<dbReference type="GO" id="GO:0031571">
    <property type="term" value="P:mitotic G1 DNA damage checkpoint signaling"/>
    <property type="evidence" value="ECO:0007669"/>
    <property type="project" value="EnsemblFungi"/>
</dbReference>
<dbReference type="GO" id="GO:0007064">
    <property type="term" value="P:mitotic sister chromatid cohesion"/>
    <property type="evidence" value="ECO:0007669"/>
    <property type="project" value="EnsemblFungi"/>
</dbReference>
<dbReference type="CDD" id="cd18788">
    <property type="entry name" value="SF2_C_XPD"/>
    <property type="match status" value="1"/>
</dbReference>
<dbReference type="FunFam" id="3.40.50.300:FF:001372">
    <property type="entry name" value="ATP-dependent DNA helicase chl1"/>
    <property type="match status" value="1"/>
</dbReference>
<dbReference type="Gene3D" id="3.40.50.300">
    <property type="entry name" value="P-loop containing nucleotide triphosphate hydrolases"/>
    <property type="match status" value="3"/>
</dbReference>
<dbReference type="InterPro" id="IPR006555">
    <property type="entry name" value="ATP-dep_Helicase_C"/>
</dbReference>
<dbReference type="InterPro" id="IPR045028">
    <property type="entry name" value="DinG/Rad3-like"/>
</dbReference>
<dbReference type="InterPro" id="IPR002464">
    <property type="entry name" value="DNA/RNA_helicase_DEAH_CS"/>
</dbReference>
<dbReference type="InterPro" id="IPR014013">
    <property type="entry name" value="Helic_SF1/SF2_ATP-bd_DinG/Rad3"/>
</dbReference>
<dbReference type="InterPro" id="IPR006554">
    <property type="entry name" value="Helicase-like_DEXD_c2"/>
</dbReference>
<dbReference type="InterPro" id="IPR027417">
    <property type="entry name" value="P-loop_NTPase"/>
</dbReference>
<dbReference type="InterPro" id="IPR010614">
    <property type="entry name" value="RAD3-like_helicase_DEAD"/>
</dbReference>
<dbReference type="InterPro" id="IPR013020">
    <property type="entry name" value="Rad3/Chl1-like"/>
</dbReference>
<dbReference type="NCBIfam" id="TIGR00604">
    <property type="entry name" value="rad3"/>
    <property type="match status" value="1"/>
</dbReference>
<dbReference type="PANTHER" id="PTHR11472:SF41">
    <property type="entry name" value="ATP-DEPENDENT DNA HELICASE DDX11-RELATED"/>
    <property type="match status" value="1"/>
</dbReference>
<dbReference type="PANTHER" id="PTHR11472">
    <property type="entry name" value="DNA REPAIR DEAD HELICASE RAD3/XP-D SUBFAMILY MEMBER"/>
    <property type="match status" value="1"/>
</dbReference>
<dbReference type="Pfam" id="PF06733">
    <property type="entry name" value="DEAD_2"/>
    <property type="match status" value="1"/>
</dbReference>
<dbReference type="Pfam" id="PF13307">
    <property type="entry name" value="Helicase_C_2"/>
    <property type="match status" value="1"/>
</dbReference>
<dbReference type="SMART" id="SM00488">
    <property type="entry name" value="DEXDc2"/>
    <property type="match status" value="1"/>
</dbReference>
<dbReference type="SMART" id="SM00491">
    <property type="entry name" value="HELICc2"/>
    <property type="match status" value="1"/>
</dbReference>
<dbReference type="SUPFAM" id="SSF52540">
    <property type="entry name" value="P-loop containing nucleoside triphosphate hydrolases"/>
    <property type="match status" value="2"/>
</dbReference>
<dbReference type="PROSITE" id="PS00690">
    <property type="entry name" value="DEAH_ATP_HELICASE"/>
    <property type="match status" value="1"/>
</dbReference>
<dbReference type="PROSITE" id="PS51193">
    <property type="entry name" value="HELICASE_ATP_BIND_2"/>
    <property type="match status" value="1"/>
</dbReference>
<proteinExistence type="inferred from homology"/>
<reference key="1">
    <citation type="journal article" date="2007" name="Nat. Biotechnol.">
        <title>Genome sequence of the lignocellulose-bioconverting and xylose-fermenting yeast Pichia stipitis.</title>
        <authorList>
            <person name="Jeffries T.W."/>
            <person name="Grigoriev I.V."/>
            <person name="Grimwood J."/>
            <person name="Laplaza J.M."/>
            <person name="Aerts A."/>
            <person name="Salamov A."/>
            <person name="Schmutz J."/>
            <person name="Lindquist E."/>
            <person name="Dehal P."/>
            <person name="Shapiro H."/>
            <person name="Jin Y.-S."/>
            <person name="Passoth V."/>
            <person name="Richardson P.M."/>
        </authorList>
    </citation>
    <scope>NUCLEOTIDE SEQUENCE [LARGE SCALE GENOMIC DNA]</scope>
    <source>
        <strain>ATCC 58785 / CBS 6054 / NBRC 10063 / NRRL Y-11545</strain>
    </source>
</reference>
<name>CHL1_PICST</name>
<feature type="chain" id="PRO_0000351015" description="ATP-dependent DNA helicase CHL1">
    <location>
        <begin position="1"/>
        <end position="835"/>
    </location>
</feature>
<feature type="domain" description="Helicase ATP-binding" evidence="4">
    <location>
        <begin position="8"/>
        <end position="421"/>
    </location>
</feature>
<feature type="region of interest" description="Disordered" evidence="5">
    <location>
        <begin position="130"/>
        <end position="167"/>
    </location>
</feature>
<feature type="short sequence motif" description="DEAH box">
    <location>
        <begin position="363"/>
        <end position="366"/>
    </location>
</feature>
<feature type="compositionally biased region" description="Basic residues" evidence="5">
    <location>
        <begin position="138"/>
        <end position="147"/>
    </location>
</feature>
<feature type="binding site" evidence="4">
    <location>
        <begin position="44"/>
        <end position="51"/>
    </location>
    <ligand>
        <name>ATP</name>
        <dbReference type="ChEBI" id="CHEBI:30616"/>
    </ligand>
</feature>
<feature type="binding site" evidence="1">
    <location>
        <position position="251"/>
    </location>
    <ligand>
        <name>[4Fe-4S] cluster</name>
        <dbReference type="ChEBI" id="CHEBI:49883"/>
    </ligand>
</feature>
<feature type="binding site" evidence="1">
    <location>
        <position position="270"/>
    </location>
    <ligand>
        <name>[4Fe-4S] cluster</name>
        <dbReference type="ChEBI" id="CHEBI:49883"/>
    </ligand>
</feature>
<feature type="binding site" evidence="1">
    <location>
        <position position="280"/>
    </location>
    <ligand>
        <name>[4Fe-4S] cluster</name>
        <dbReference type="ChEBI" id="CHEBI:49883"/>
    </ligand>
</feature>
<feature type="binding site" evidence="1">
    <location>
        <position position="320"/>
    </location>
    <ligand>
        <name>[4Fe-4S] cluster</name>
        <dbReference type="ChEBI" id="CHEBI:49883"/>
    </ligand>
</feature>
<gene>
    <name type="primary">CHL1</name>
    <name type="ORF">PICST_54439</name>
</gene>
<evidence type="ECO:0000250" key="1">
    <source>
        <dbReference type="UniProtKB" id="P18074"/>
    </source>
</evidence>
<evidence type="ECO:0000250" key="2">
    <source>
        <dbReference type="UniProtKB" id="P22516"/>
    </source>
</evidence>
<evidence type="ECO:0000250" key="3">
    <source>
        <dbReference type="UniProtKB" id="Q96FC9"/>
    </source>
</evidence>
<evidence type="ECO:0000255" key="4">
    <source>
        <dbReference type="PROSITE-ProRule" id="PRU00541"/>
    </source>
</evidence>
<evidence type="ECO:0000256" key="5">
    <source>
        <dbReference type="SAM" id="MobiDB-lite"/>
    </source>
</evidence>
<evidence type="ECO:0000305" key="6"/>
<comment type="function">
    <text evidence="2">ATP-dependent DNA helicase important for chromosome transmission and normal cell cycle progression in G(2)/M (By similarity). May have a role in changing DNA topology to allow the loading of proteins involved in maintaining sister chromatid cohesion in the vicinity of the centromeres (By similarity). Has a specific role in chromosome segregation during meiosis II (By similarity).</text>
</comment>
<comment type="catalytic activity">
    <reaction evidence="3">
        <text>Couples ATP hydrolysis with the unwinding of duplex DNA at the replication fork by translocating in the 5'-3' direction. This creates two antiparallel DNA single strands (ssDNA). The leading ssDNA polymer is the template for DNA polymerase III holoenzyme which synthesizes a continuous strand.</text>
        <dbReference type="EC" id="5.6.2.3"/>
    </reaction>
</comment>
<comment type="catalytic activity">
    <reaction evidence="3">
        <text>ATP + H2O = ADP + phosphate + H(+)</text>
        <dbReference type="Rhea" id="RHEA:13065"/>
        <dbReference type="ChEBI" id="CHEBI:15377"/>
        <dbReference type="ChEBI" id="CHEBI:15378"/>
        <dbReference type="ChEBI" id="CHEBI:30616"/>
        <dbReference type="ChEBI" id="CHEBI:43474"/>
        <dbReference type="ChEBI" id="CHEBI:456216"/>
        <dbReference type="EC" id="5.6.2.3"/>
    </reaction>
</comment>
<comment type="cofactor">
    <cofactor evidence="1">
        <name>[4Fe-4S] cluster</name>
        <dbReference type="ChEBI" id="CHEBI:49883"/>
    </cofactor>
    <text evidence="1">Binds 1 [4Fe-4S] cluster.</text>
</comment>
<comment type="subcellular location">
    <subcellularLocation>
        <location evidence="2">Nucleus</location>
    </subcellularLocation>
</comment>
<comment type="similarity">
    <text evidence="6">Belongs to the DEAD box helicase family. DEAH subfamily. DDX11/CHL1 sub-subfamily.</text>
</comment>
<keyword id="KW-0067">ATP-binding</keyword>
<keyword id="KW-0131">Cell cycle</keyword>
<keyword id="KW-0238">DNA-binding</keyword>
<keyword id="KW-0347">Helicase</keyword>
<keyword id="KW-0378">Hydrolase</keyword>
<keyword id="KW-0408">Iron</keyword>
<keyword id="KW-0411">Iron-sulfur</keyword>
<keyword id="KW-0413">Isomerase</keyword>
<keyword id="KW-0479">Metal-binding</keyword>
<keyword id="KW-0547">Nucleotide-binding</keyword>
<keyword id="KW-0539">Nucleus</keyword>
<keyword id="KW-1185">Reference proteome</keyword>
<accession>A3LN13</accession>